<reference key="1">
    <citation type="journal article" date="2009" name="Genome Res.">
        <title>Newly introduced genomic prophage islands are critical determinants of in vivo competitiveness in the Liverpool epidemic strain of Pseudomonas aeruginosa.</title>
        <authorList>
            <person name="Winstanley C."/>
            <person name="Langille M.G.I."/>
            <person name="Fothergill J.L."/>
            <person name="Kukavica-Ibrulj I."/>
            <person name="Paradis-Bleau C."/>
            <person name="Sanschagrin F."/>
            <person name="Thomson N.R."/>
            <person name="Winsor G.L."/>
            <person name="Quail M.A."/>
            <person name="Lennard N."/>
            <person name="Bignell A."/>
            <person name="Clarke L."/>
            <person name="Seeger K."/>
            <person name="Saunders D."/>
            <person name="Harris D."/>
            <person name="Parkhill J."/>
            <person name="Hancock R.E.W."/>
            <person name="Brinkman F.S.L."/>
            <person name="Levesque R.C."/>
        </authorList>
    </citation>
    <scope>NUCLEOTIDE SEQUENCE [LARGE SCALE GENOMIC DNA]</scope>
    <source>
        <strain>LESB58</strain>
    </source>
</reference>
<organism>
    <name type="scientific">Pseudomonas aeruginosa (strain LESB58)</name>
    <dbReference type="NCBI Taxonomy" id="557722"/>
    <lineage>
        <taxon>Bacteria</taxon>
        <taxon>Pseudomonadati</taxon>
        <taxon>Pseudomonadota</taxon>
        <taxon>Gammaproteobacteria</taxon>
        <taxon>Pseudomonadales</taxon>
        <taxon>Pseudomonadaceae</taxon>
        <taxon>Pseudomonas</taxon>
    </lineage>
</organism>
<gene>
    <name evidence="1" type="primary">argS</name>
    <name type="ordered locus">PLES_54411</name>
</gene>
<comment type="catalytic activity">
    <reaction evidence="1">
        <text>tRNA(Arg) + L-arginine + ATP = L-arginyl-tRNA(Arg) + AMP + diphosphate</text>
        <dbReference type="Rhea" id="RHEA:20301"/>
        <dbReference type="Rhea" id="RHEA-COMP:9658"/>
        <dbReference type="Rhea" id="RHEA-COMP:9673"/>
        <dbReference type="ChEBI" id="CHEBI:30616"/>
        <dbReference type="ChEBI" id="CHEBI:32682"/>
        <dbReference type="ChEBI" id="CHEBI:33019"/>
        <dbReference type="ChEBI" id="CHEBI:78442"/>
        <dbReference type="ChEBI" id="CHEBI:78513"/>
        <dbReference type="ChEBI" id="CHEBI:456215"/>
        <dbReference type="EC" id="6.1.1.19"/>
    </reaction>
</comment>
<comment type="subunit">
    <text evidence="1">Monomer.</text>
</comment>
<comment type="subcellular location">
    <subcellularLocation>
        <location evidence="1">Cytoplasm</location>
    </subcellularLocation>
</comment>
<comment type="similarity">
    <text evidence="1">Belongs to the class-I aminoacyl-tRNA synthetase family.</text>
</comment>
<accession>B7V3E4</accession>
<evidence type="ECO:0000255" key="1">
    <source>
        <dbReference type="HAMAP-Rule" id="MF_00123"/>
    </source>
</evidence>
<proteinExistence type="inferred from homology"/>
<feature type="chain" id="PRO_1000198927" description="Arginine--tRNA ligase">
    <location>
        <begin position="1"/>
        <end position="587"/>
    </location>
</feature>
<feature type="short sequence motif" description="'HIGH' region">
    <location>
        <begin position="127"/>
        <end position="137"/>
    </location>
</feature>
<dbReference type="EC" id="6.1.1.19" evidence="1"/>
<dbReference type="EMBL" id="FM209186">
    <property type="protein sequence ID" value="CAW30195.1"/>
    <property type="molecule type" value="Genomic_DNA"/>
</dbReference>
<dbReference type="RefSeq" id="WP_012614630.1">
    <property type="nucleotide sequence ID" value="NC_011770.1"/>
</dbReference>
<dbReference type="SMR" id="B7V3E4"/>
<dbReference type="KEGG" id="pag:PLES_54411"/>
<dbReference type="HOGENOM" id="CLU_006406_5_1_6"/>
<dbReference type="GO" id="GO:0005737">
    <property type="term" value="C:cytoplasm"/>
    <property type="evidence" value="ECO:0007669"/>
    <property type="project" value="UniProtKB-SubCell"/>
</dbReference>
<dbReference type="GO" id="GO:0004814">
    <property type="term" value="F:arginine-tRNA ligase activity"/>
    <property type="evidence" value="ECO:0007669"/>
    <property type="project" value="UniProtKB-UniRule"/>
</dbReference>
<dbReference type="GO" id="GO:0005524">
    <property type="term" value="F:ATP binding"/>
    <property type="evidence" value="ECO:0007669"/>
    <property type="project" value="UniProtKB-UniRule"/>
</dbReference>
<dbReference type="GO" id="GO:0006420">
    <property type="term" value="P:arginyl-tRNA aminoacylation"/>
    <property type="evidence" value="ECO:0007669"/>
    <property type="project" value="UniProtKB-UniRule"/>
</dbReference>
<dbReference type="CDD" id="cd00671">
    <property type="entry name" value="ArgRS_core"/>
    <property type="match status" value="1"/>
</dbReference>
<dbReference type="FunFam" id="1.10.730.10:FF:000001">
    <property type="entry name" value="Arginine--tRNA ligase"/>
    <property type="match status" value="1"/>
</dbReference>
<dbReference type="FunFam" id="3.30.1360.70:FF:000003">
    <property type="entry name" value="Arginine--tRNA ligase"/>
    <property type="match status" value="1"/>
</dbReference>
<dbReference type="FunFam" id="3.40.50.620:FF:000030">
    <property type="entry name" value="Arginine--tRNA ligase"/>
    <property type="match status" value="1"/>
</dbReference>
<dbReference type="Gene3D" id="3.30.1360.70">
    <property type="entry name" value="Arginyl tRNA synthetase N-terminal domain"/>
    <property type="match status" value="1"/>
</dbReference>
<dbReference type="Gene3D" id="3.40.50.620">
    <property type="entry name" value="HUPs"/>
    <property type="match status" value="1"/>
</dbReference>
<dbReference type="Gene3D" id="1.10.730.10">
    <property type="entry name" value="Isoleucyl-tRNA Synthetase, Domain 1"/>
    <property type="match status" value="1"/>
</dbReference>
<dbReference type="HAMAP" id="MF_00123">
    <property type="entry name" value="Arg_tRNA_synth"/>
    <property type="match status" value="1"/>
</dbReference>
<dbReference type="InterPro" id="IPR001412">
    <property type="entry name" value="aa-tRNA-synth_I_CS"/>
</dbReference>
<dbReference type="InterPro" id="IPR001278">
    <property type="entry name" value="Arg-tRNA-ligase"/>
</dbReference>
<dbReference type="InterPro" id="IPR005148">
    <property type="entry name" value="Arg-tRNA-synth_N"/>
</dbReference>
<dbReference type="InterPro" id="IPR036695">
    <property type="entry name" value="Arg-tRNA-synth_N_sf"/>
</dbReference>
<dbReference type="InterPro" id="IPR035684">
    <property type="entry name" value="ArgRS_core"/>
</dbReference>
<dbReference type="InterPro" id="IPR008909">
    <property type="entry name" value="DALR_anticod-bd"/>
</dbReference>
<dbReference type="InterPro" id="IPR014729">
    <property type="entry name" value="Rossmann-like_a/b/a_fold"/>
</dbReference>
<dbReference type="InterPro" id="IPR009080">
    <property type="entry name" value="tRNAsynth_Ia_anticodon-bd"/>
</dbReference>
<dbReference type="NCBIfam" id="TIGR00456">
    <property type="entry name" value="argS"/>
    <property type="match status" value="1"/>
</dbReference>
<dbReference type="PANTHER" id="PTHR11956:SF5">
    <property type="entry name" value="ARGININE--TRNA LIGASE, CYTOPLASMIC"/>
    <property type="match status" value="1"/>
</dbReference>
<dbReference type="PANTHER" id="PTHR11956">
    <property type="entry name" value="ARGINYL-TRNA SYNTHETASE"/>
    <property type="match status" value="1"/>
</dbReference>
<dbReference type="Pfam" id="PF03485">
    <property type="entry name" value="Arg_tRNA_synt_N"/>
    <property type="match status" value="1"/>
</dbReference>
<dbReference type="Pfam" id="PF05746">
    <property type="entry name" value="DALR_1"/>
    <property type="match status" value="1"/>
</dbReference>
<dbReference type="Pfam" id="PF00750">
    <property type="entry name" value="tRNA-synt_1d"/>
    <property type="match status" value="1"/>
</dbReference>
<dbReference type="PRINTS" id="PR01038">
    <property type="entry name" value="TRNASYNTHARG"/>
</dbReference>
<dbReference type="SMART" id="SM01016">
    <property type="entry name" value="Arg_tRNA_synt_N"/>
    <property type="match status" value="1"/>
</dbReference>
<dbReference type="SMART" id="SM00836">
    <property type="entry name" value="DALR_1"/>
    <property type="match status" value="1"/>
</dbReference>
<dbReference type="SUPFAM" id="SSF47323">
    <property type="entry name" value="Anticodon-binding domain of a subclass of class I aminoacyl-tRNA synthetases"/>
    <property type="match status" value="1"/>
</dbReference>
<dbReference type="SUPFAM" id="SSF55190">
    <property type="entry name" value="Arginyl-tRNA synthetase (ArgRS), N-terminal 'additional' domain"/>
    <property type="match status" value="1"/>
</dbReference>
<dbReference type="SUPFAM" id="SSF52374">
    <property type="entry name" value="Nucleotidylyl transferase"/>
    <property type="match status" value="1"/>
</dbReference>
<dbReference type="PROSITE" id="PS00178">
    <property type="entry name" value="AA_TRNA_LIGASE_I"/>
    <property type="match status" value="1"/>
</dbReference>
<name>SYR_PSEA8</name>
<sequence>MKDTIRQLIQQALDQLTADGTLPAGLTPDIQVENTKDRSHGDFASNIAMMLAKPAGMKPRDLAARLVEAIPAHEQLAKVEIAGPGFLNFFQDHVWLAASLDRALADERLGVRKAGPAQRVVIDLSSPNLAKEMHVGHLRSTIIGDAVARVLEFLGDTVIRQNHVGDWGTQFGMLLAYLEEQPIDAEAELHDLEVFYRAAKKRFDESPEFADRARELVVKLQAGDPDCLRLWTRFNEISLSHCQKVYDRLGVKLSMADVMGESAYNDDLAQVVADLTAKGLLTEDNGALCVFLEEFKNAEGNPLPVIVQKAGGGYLYATTDLAAMRYRHNVLHADRVLYFVDQRQALHFQQVFEVARRAGFVPAGMELEHMGFGTMNGADGRPFKTRDGGTVKLIDLLEEAESRAYALVKERNEQRAERGEEPFDEVQLREIGRVVGIDSVKYADLSKHRTSDYSFNFELMLSFEGNTAPYLLYACTRVASVFRKLGQGREQLGGKIVLEQPQELALAAQLAQFGDLINNVALKGVPHLLCAYLYELAGLFSSFYEHCPILTAEDPAQKDSRLRLAALTGRTLEQGLELLGLKTLERM</sequence>
<keyword id="KW-0030">Aminoacyl-tRNA synthetase</keyword>
<keyword id="KW-0067">ATP-binding</keyword>
<keyword id="KW-0963">Cytoplasm</keyword>
<keyword id="KW-0436">Ligase</keyword>
<keyword id="KW-0547">Nucleotide-binding</keyword>
<keyword id="KW-0648">Protein biosynthesis</keyword>
<protein>
    <recommendedName>
        <fullName evidence="1">Arginine--tRNA ligase</fullName>
        <ecNumber evidence="1">6.1.1.19</ecNumber>
    </recommendedName>
    <alternativeName>
        <fullName evidence="1">Arginyl-tRNA synthetase</fullName>
        <shortName evidence="1">ArgRS</shortName>
    </alternativeName>
</protein>